<proteinExistence type="evidence at protein level"/>
<evidence type="ECO:0000250" key="1">
    <source>
        <dbReference type="UniProtKB" id="P82617"/>
    </source>
</evidence>
<evidence type="ECO:0000255" key="2"/>
<evidence type="ECO:0000269" key="3">
    <source>
    </source>
</evidence>
<evidence type="ECO:0000303" key="4">
    <source>
    </source>
</evidence>
<evidence type="ECO:0000305" key="5"/>
<protein>
    <recommendedName>
        <fullName evidence="1">Pyrokinin-5</fullName>
    </recommendedName>
    <alternativeName>
        <fullName evidence="4">EllSp-Capa-PK</fullName>
    </alternativeName>
    <alternativeName>
        <fullName evidence="1">FXPRL-amide</fullName>
    </alternativeName>
</protein>
<comment type="function">
    <text evidence="1">Myoactive.</text>
</comment>
<comment type="subcellular location">
    <subcellularLocation>
        <location evidence="5">Secreted</location>
    </subcellularLocation>
</comment>
<comment type="similarity">
    <text evidence="2">Belongs to the pyrokinin family.</text>
</comment>
<feature type="peptide" id="PRO_0000378689" description="Pyrokinin-5" evidence="3">
    <location>
        <begin position="1"/>
        <end position="17"/>
    </location>
</feature>
<feature type="modified residue" description="Leucine amide" evidence="3">
    <location>
        <position position="17"/>
    </location>
</feature>
<organism>
    <name type="scientific">Elliptorhina sp. (strain SR-2005)</name>
    <name type="common">Hisser roach</name>
    <dbReference type="NCBI Taxonomy" id="348767"/>
    <lineage>
        <taxon>Eukaryota</taxon>
        <taxon>Metazoa</taxon>
        <taxon>Ecdysozoa</taxon>
        <taxon>Arthropoda</taxon>
        <taxon>Hexapoda</taxon>
        <taxon>Insecta</taxon>
        <taxon>Pterygota</taxon>
        <taxon>Neoptera</taxon>
        <taxon>Polyneoptera</taxon>
        <taxon>Dictyoptera</taxon>
        <taxon>Blattodea</taxon>
        <taxon>Blaberoidea</taxon>
        <taxon>Blaberidae</taxon>
        <taxon>Oxyhaloinae</taxon>
        <taxon>Elliptorhina</taxon>
    </lineage>
</organism>
<accession>P85607</accession>
<name>PPK5_ELLSS</name>
<keyword id="KW-0027">Amidation</keyword>
<keyword id="KW-0903">Direct protein sequencing</keyword>
<keyword id="KW-0527">Neuropeptide</keyword>
<keyword id="KW-0964">Secreted</keyword>
<reference evidence="5" key="1">
    <citation type="journal article" date="2009" name="BMC Evol. Biol.">
        <title>A proteomic approach for studying insect phylogeny: CAPA peptides of ancient insect taxa (Dictyoptera, Blattoptera) as a test case.</title>
        <authorList>
            <person name="Roth S."/>
            <person name="Fromm B."/>
            <person name="Gaede G."/>
            <person name="Predel R."/>
        </authorList>
    </citation>
    <scope>PROTEIN SEQUENCE</scope>
    <scope>AMIDATION AT LEU-17</scope>
    <source>
        <tissue evidence="3">Abdominal perisympathetic organs</tissue>
    </source>
</reference>
<sequence>FGETSGETKGMWFGPRL</sequence>
<dbReference type="GO" id="GO:0005576">
    <property type="term" value="C:extracellular region"/>
    <property type="evidence" value="ECO:0007669"/>
    <property type="project" value="UniProtKB-SubCell"/>
</dbReference>
<dbReference type="GO" id="GO:0005184">
    <property type="term" value="F:neuropeptide hormone activity"/>
    <property type="evidence" value="ECO:0007669"/>
    <property type="project" value="InterPro"/>
</dbReference>
<dbReference type="GO" id="GO:0007218">
    <property type="term" value="P:neuropeptide signaling pathway"/>
    <property type="evidence" value="ECO:0007669"/>
    <property type="project" value="UniProtKB-KW"/>
</dbReference>
<dbReference type="InterPro" id="IPR001484">
    <property type="entry name" value="Pyrokinin_CS"/>
</dbReference>
<dbReference type="PROSITE" id="PS00539">
    <property type="entry name" value="PYROKININ"/>
    <property type="match status" value="1"/>
</dbReference>